<name>YIDC_PSEF5</name>
<evidence type="ECO:0000255" key="1">
    <source>
        <dbReference type="HAMAP-Rule" id="MF_01810"/>
    </source>
</evidence>
<evidence type="ECO:0000256" key="2">
    <source>
        <dbReference type="SAM" id="MobiDB-lite"/>
    </source>
</evidence>
<proteinExistence type="inferred from homology"/>
<accession>Q4K395</accession>
<protein>
    <recommendedName>
        <fullName evidence="1">Membrane protein insertase YidC</fullName>
    </recommendedName>
    <alternativeName>
        <fullName evidence="1">Foldase YidC</fullName>
    </alternativeName>
    <alternativeName>
        <fullName evidence="1">Membrane integrase YidC</fullName>
    </alternativeName>
    <alternativeName>
        <fullName evidence="1">Membrane protein YidC</fullName>
    </alternativeName>
</protein>
<dbReference type="EMBL" id="CP000076">
    <property type="protein sequence ID" value="AAY95418.1"/>
    <property type="molecule type" value="Genomic_DNA"/>
</dbReference>
<dbReference type="RefSeq" id="WP_011064394.1">
    <property type="nucleotide sequence ID" value="NC_004129.6"/>
</dbReference>
<dbReference type="SMR" id="Q4K395"/>
<dbReference type="STRING" id="220664.PFL_6230"/>
<dbReference type="GeneID" id="57479191"/>
<dbReference type="KEGG" id="pfl:PFL_6230"/>
<dbReference type="PATRIC" id="fig|220664.5.peg.6361"/>
<dbReference type="eggNOG" id="COG0706">
    <property type="taxonomic scope" value="Bacteria"/>
</dbReference>
<dbReference type="HOGENOM" id="CLU_016535_3_0_6"/>
<dbReference type="Proteomes" id="UP000008540">
    <property type="component" value="Chromosome"/>
</dbReference>
<dbReference type="GO" id="GO:0005886">
    <property type="term" value="C:plasma membrane"/>
    <property type="evidence" value="ECO:0007669"/>
    <property type="project" value="UniProtKB-SubCell"/>
</dbReference>
<dbReference type="GO" id="GO:0032977">
    <property type="term" value="F:membrane insertase activity"/>
    <property type="evidence" value="ECO:0007669"/>
    <property type="project" value="InterPro"/>
</dbReference>
<dbReference type="GO" id="GO:0051205">
    <property type="term" value="P:protein insertion into membrane"/>
    <property type="evidence" value="ECO:0007669"/>
    <property type="project" value="TreeGrafter"/>
</dbReference>
<dbReference type="GO" id="GO:0015031">
    <property type="term" value="P:protein transport"/>
    <property type="evidence" value="ECO:0007669"/>
    <property type="project" value="UniProtKB-KW"/>
</dbReference>
<dbReference type="CDD" id="cd20070">
    <property type="entry name" value="5TM_YidC_Alb3"/>
    <property type="match status" value="1"/>
</dbReference>
<dbReference type="CDD" id="cd19961">
    <property type="entry name" value="EcYidC-like_peri"/>
    <property type="match status" value="1"/>
</dbReference>
<dbReference type="Gene3D" id="2.70.98.90">
    <property type="match status" value="1"/>
</dbReference>
<dbReference type="HAMAP" id="MF_01810">
    <property type="entry name" value="YidC_type1"/>
    <property type="match status" value="1"/>
</dbReference>
<dbReference type="InterPro" id="IPR019998">
    <property type="entry name" value="Membr_insert_YidC"/>
</dbReference>
<dbReference type="InterPro" id="IPR028053">
    <property type="entry name" value="Membr_insert_YidC_N"/>
</dbReference>
<dbReference type="InterPro" id="IPR001708">
    <property type="entry name" value="YidC/ALB3/OXA1/COX18"/>
</dbReference>
<dbReference type="InterPro" id="IPR028055">
    <property type="entry name" value="YidC/Oxa/ALB_C"/>
</dbReference>
<dbReference type="InterPro" id="IPR047196">
    <property type="entry name" value="YidC_ALB_C"/>
</dbReference>
<dbReference type="InterPro" id="IPR038221">
    <property type="entry name" value="YidC_periplasmic_sf"/>
</dbReference>
<dbReference type="NCBIfam" id="NF002352">
    <property type="entry name" value="PRK01318.1-3"/>
    <property type="match status" value="1"/>
</dbReference>
<dbReference type="NCBIfam" id="NF002353">
    <property type="entry name" value="PRK01318.1-4"/>
    <property type="match status" value="1"/>
</dbReference>
<dbReference type="NCBIfam" id="TIGR03593">
    <property type="entry name" value="yidC_nterm"/>
    <property type="match status" value="1"/>
</dbReference>
<dbReference type="NCBIfam" id="TIGR03592">
    <property type="entry name" value="yidC_oxa1_cterm"/>
    <property type="match status" value="1"/>
</dbReference>
<dbReference type="PANTHER" id="PTHR12428:SF65">
    <property type="entry name" value="CYTOCHROME C OXIDASE ASSEMBLY PROTEIN COX18, MITOCHONDRIAL"/>
    <property type="match status" value="1"/>
</dbReference>
<dbReference type="PANTHER" id="PTHR12428">
    <property type="entry name" value="OXA1"/>
    <property type="match status" value="1"/>
</dbReference>
<dbReference type="Pfam" id="PF02096">
    <property type="entry name" value="60KD_IMP"/>
    <property type="match status" value="1"/>
</dbReference>
<dbReference type="Pfam" id="PF14849">
    <property type="entry name" value="YidC_periplas"/>
    <property type="match status" value="1"/>
</dbReference>
<dbReference type="PRINTS" id="PR00701">
    <property type="entry name" value="60KDINNERMP"/>
</dbReference>
<dbReference type="PRINTS" id="PR01900">
    <property type="entry name" value="YIDCPROTEIN"/>
</dbReference>
<comment type="function">
    <text evidence="1">Required for the insertion and/or proper folding and/or complex formation of integral membrane proteins into the membrane. Involved in integration of membrane proteins that insert both dependently and independently of the Sec translocase complex, as well as at least some lipoproteins. Aids folding of multispanning membrane proteins.</text>
</comment>
<comment type="subunit">
    <text evidence="1">Interacts with the Sec translocase complex via SecD. Specifically interacts with transmembrane segments of nascent integral membrane proteins during membrane integration.</text>
</comment>
<comment type="subcellular location">
    <subcellularLocation>
        <location evidence="1">Cell inner membrane</location>
        <topology evidence="1">Multi-pass membrane protein</topology>
    </subcellularLocation>
</comment>
<comment type="similarity">
    <text evidence="1">Belongs to the OXA1/ALB3/YidC family. Type 1 subfamily.</text>
</comment>
<keyword id="KW-0997">Cell inner membrane</keyword>
<keyword id="KW-1003">Cell membrane</keyword>
<keyword id="KW-0143">Chaperone</keyword>
<keyword id="KW-0472">Membrane</keyword>
<keyword id="KW-0653">Protein transport</keyword>
<keyword id="KW-0812">Transmembrane</keyword>
<keyword id="KW-1133">Transmembrane helix</keyword>
<keyword id="KW-0813">Transport</keyword>
<organism>
    <name type="scientific">Pseudomonas fluorescens (strain ATCC BAA-477 / NRRL B-23932 / Pf-5)</name>
    <dbReference type="NCBI Taxonomy" id="220664"/>
    <lineage>
        <taxon>Bacteria</taxon>
        <taxon>Pseudomonadati</taxon>
        <taxon>Pseudomonadota</taxon>
        <taxon>Gammaproteobacteria</taxon>
        <taxon>Pseudomonadales</taxon>
        <taxon>Pseudomonadaceae</taxon>
        <taxon>Pseudomonas</taxon>
    </lineage>
</organism>
<reference key="1">
    <citation type="journal article" date="2005" name="Nat. Biotechnol.">
        <title>Complete genome sequence of the plant commensal Pseudomonas fluorescens Pf-5.</title>
        <authorList>
            <person name="Paulsen I.T."/>
            <person name="Press C.M."/>
            <person name="Ravel J."/>
            <person name="Kobayashi D.Y."/>
            <person name="Myers G.S.A."/>
            <person name="Mavrodi D.V."/>
            <person name="DeBoy R.T."/>
            <person name="Seshadri R."/>
            <person name="Ren Q."/>
            <person name="Madupu R."/>
            <person name="Dodson R.J."/>
            <person name="Durkin A.S."/>
            <person name="Brinkac L.M."/>
            <person name="Daugherty S.C."/>
            <person name="Sullivan S.A."/>
            <person name="Rosovitz M.J."/>
            <person name="Gwinn M.L."/>
            <person name="Zhou L."/>
            <person name="Schneider D.J."/>
            <person name="Cartinhour S.W."/>
            <person name="Nelson W.C."/>
            <person name="Weidman J."/>
            <person name="Watkins K."/>
            <person name="Tran K."/>
            <person name="Khouri H."/>
            <person name="Pierson E.A."/>
            <person name="Pierson L.S. III"/>
            <person name="Thomashow L.S."/>
            <person name="Loper J.E."/>
        </authorList>
    </citation>
    <scope>NUCLEOTIDE SEQUENCE [LARGE SCALE GENOMIC DNA]</scope>
    <source>
        <strain>ATCC BAA-477 / NRRL B-23932 / Pf-5</strain>
    </source>
</reference>
<feature type="chain" id="PRO_1000070140" description="Membrane protein insertase YidC">
    <location>
        <begin position="1"/>
        <end position="566"/>
    </location>
</feature>
<feature type="transmembrane region" description="Helical" evidence="1">
    <location>
        <begin position="7"/>
        <end position="27"/>
    </location>
</feature>
<feature type="transmembrane region" description="Helical" evidence="1">
    <location>
        <begin position="347"/>
        <end position="367"/>
    </location>
</feature>
<feature type="transmembrane region" description="Helical" evidence="1">
    <location>
        <begin position="373"/>
        <end position="393"/>
    </location>
</feature>
<feature type="transmembrane region" description="Helical" evidence="1">
    <location>
        <begin position="443"/>
        <end position="463"/>
    </location>
</feature>
<feature type="transmembrane region" description="Helical" evidence="1">
    <location>
        <begin position="474"/>
        <end position="494"/>
    </location>
</feature>
<feature type="transmembrane region" description="Helical" evidence="1">
    <location>
        <begin position="521"/>
        <end position="541"/>
    </location>
</feature>
<feature type="region of interest" description="Disordered" evidence="2">
    <location>
        <begin position="38"/>
        <end position="72"/>
    </location>
</feature>
<sequence length="566" mass="62650">MDIKRTILIVALAIVSYVMVLKWNQDYGQAALPTQNVASSTTAPGLPDAPTGTSAANDDIPRAASDTTAPAEAPVAASKDLIQIKTDVLDLAVDPQGGDIAQLRLPLYPRRQDHPEIPFQLFDNGNERTYLAQSGLIGSNGPDASPAGRPIYSAEKKSYQLADGQDQLVVDLKFSKDGVNYIKRFTLKRGLYDITVSYLIDNESAQPWTGAMFAQLKRDASSDPSSSTATGTATYLGAALWTSSEPYKKVSMKDMDKVNEDKSKAPITENVQGGWVAWLQHYFVTAWIPPKGENNQVLARKDSKGNYIIGYTGPSMTVAPGAKAETSAILYAGPKSQAVLKELSPGLELTVDYGFLWFIAQPIFWLLQHIHSLVGNWGWSIIFLTMLIKGIFFPLSAASYKSMARMRAVAPKLAALKEKFGDDRQKMSQAMMELYKKEKINPLGGCLPILVQMPVFLSLYWVLLESVEMRQAPFMLWITDLSIKDPFFILPIIMGATMFIQQQLNPTPPDPMQAKVMKMMPIIFTFFFLWFPAGLVLYWVVNNCLSIAQQWYITRKIEAATKKAAA</sequence>
<gene>
    <name evidence="1" type="primary">yidC</name>
    <name type="ordered locus">PFL_6230</name>
</gene>